<name>MINK1_RAT</name>
<proteinExistence type="evidence at protein level"/>
<evidence type="ECO:0000250" key="1"/>
<evidence type="ECO:0000250" key="2">
    <source>
        <dbReference type="UniProtKB" id="Q8N4C8"/>
    </source>
</evidence>
<evidence type="ECO:0000250" key="3">
    <source>
        <dbReference type="UniProtKB" id="Q9JM52"/>
    </source>
</evidence>
<evidence type="ECO:0000255" key="4">
    <source>
        <dbReference type="PROSITE-ProRule" id="PRU00159"/>
    </source>
</evidence>
<evidence type="ECO:0000255" key="5">
    <source>
        <dbReference type="PROSITE-ProRule" id="PRU00795"/>
    </source>
</evidence>
<evidence type="ECO:0000255" key="6">
    <source>
        <dbReference type="PROSITE-ProRule" id="PRU10027"/>
    </source>
</evidence>
<evidence type="ECO:0000256" key="7">
    <source>
        <dbReference type="SAM" id="MobiDB-lite"/>
    </source>
</evidence>
<evidence type="ECO:0000269" key="8">
    <source>
    </source>
</evidence>
<evidence type="ECO:0000269" key="9">
    <source>
    </source>
</evidence>
<evidence type="ECO:0000305" key="10"/>
<evidence type="ECO:0007744" key="11">
    <source>
    </source>
</evidence>
<sequence length="1336" mass="150382">MGDPAPARQSDFIFLVALRDPAGIFELVEVVGNGTYGQVYKGRHVKTGQLAAIKVMDVTEDEEEEIKQEINMLKKYSHHRNIATYYGAFIKKSPPGNDDQLWLVMEFCGAGSVTDLVKNTKGNALKEDCIAYICREILRGLAHLHAHKVIHRDIKGQNVLLTENAEVKLVDFGVSAQLDRTVGRRNTFIGTPYWMAPEVIACDENPDATYDYRSDIWSLGITAIEMAEGAPPLCDMHPMRALFLIPRNPPPRLKSKKWSKKFTDFIDTCLIKTYLSRPPTEQLLKFPFIRDQPTERQVRIQLKDHIDRSRKKRGEKEETEYEYSGSEEEDDSHGEEGEPSSIMNVPGESTLRREFLRLQQENKSNSEALKQQQQLQQQQQRDPEAHIKHLLHQRQRRIEEQKEERRRVEEQQRREREQRKLQEKEQQRRLEDMQALRREEERRQAEREQEYKRKQLEEQRQSERLQRQLQQEHAYLNSQKQQQQQQQQQQQQQQQQILPGDRKPLYHYGRGINPADKPAWAREVEERARMNKQQNSPLAKTKPSSAGPEPPIPQASPSPPGPLSQTPPMQRPVEPQEGPHKSLVAHRVPLKPYAAPVPRSQSLQDQPTRNLAAFPASHDPDPAAVPTPTATPSARGAVIRQNSDPTSEGPGPSPNPPSWVRPDNEAPPKVPQRTSSIATALNTSGAGGSRPAQAVRARPRSNSAWQIYLQRRAERGTPKPPGPPAQPPGPPNTSSNPDLRRSDPGWERSDSVLPASHGHLPQAGSLERNRNRVGASTKLDSSPVLSPGNKAKPEDHRSRPGRPADFVLLKERTLDEAPKPPKKAMDYSSSSEEVESSEDEEEEGDGEPSEGSRDTPGGRSDGDTDSVSTMVVHDVEEVSGTQPSYGGGTMVVQRTPEEERSLLLADSNGYTNLPDVVQPSHSPTENSQGQSPPTKDGGGDYQSRGLVKAPGKSSFTMFVDLGIYQPGGSGDTIPITALVGGEGGRLDQLQFDVRKGSVVNVNPTNTRAHSETPEIRKYKKRFNSEILCAALWGVNLLVGTENGLMLLDRSGQGKVYGLIGRRRFQQMDVLEGLNLLITISGKRNKLRVYYLSWLRNKILHNDPEVEKKQGWTTVGDMEGCGHYRVVKYERIKFLVIALKNSVEVYAWAPKPYHKFMAFKSFADLPHRPLLVDLTVEEGQRLKVIYGSSAGFHAVDVDSGNSYDIYIPVHIQSQITPHAIVFLPNTDGMEMLLCYEDEGVYVNTYGRIIKDVVLQWGEMPTSVAYICSNQIMGWGEKAIEIRSVETGHLDGVFMHKRAQRLKFLCERNDKVFFASVRSGGSSQVYFMTLNRNCIMNW</sequence>
<protein>
    <recommendedName>
        <fullName>Misshapen-like kinase 1</fullName>
        <ecNumber>2.7.11.1</ecNumber>
    </recommendedName>
    <alternativeName>
        <fullName>GCK family kinase MiNK</fullName>
    </alternativeName>
    <alternativeName>
        <fullName>MAPK/ERK kinase kinase kinase 6</fullName>
        <shortName>MEK kinase kinase 6</shortName>
        <shortName>MEKKK 6</shortName>
    </alternativeName>
    <alternativeName>
        <fullName>Misshapen/NIK-related kinase</fullName>
    </alternativeName>
    <alternativeName>
        <fullName>Mitogen-activated protein kinase kinase kinase kinase 6</fullName>
    </alternativeName>
</protein>
<reference key="1">
    <citation type="journal article" date="2004" name="Nature">
        <title>Genome sequence of the Brown Norway rat yields insights into mammalian evolution.</title>
        <authorList>
            <person name="Gibbs R.A."/>
            <person name="Weinstock G.M."/>
            <person name="Metzker M.L."/>
            <person name="Muzny D.M."/>
            <person name="Sodergren E.J."/>
            <person name="Scherer S."/>
            <person name="Scott G."/>
            <person name="Steffen D."/>
            <person name="Worley K.C."/>
            <person name="Burch P.E."/>
            <person name="Okwuonu G."/>
            <person name="Hines S."/>
            <person name="Lewis L."/>
            <person name="Deramo C."/>
            <person name="Delgado O."/>
            <person name="Dugan-Rocha S."/>
            <person name="Miner G."/>
            <person name="Morgan M."/>
            <person name="Hawes A."/>
            <person name="Gill R."/>
            <person name="Holt R.A."/>
            <person name="Adams M.D."/>
            <person name="Amanatides P.G."/>
            <person name="Baden-Tillson H."/>
            <person name="Barnstead M."/>
            <person name="Chin S."/>
            <person name="Evans C.A."/>
            <person name="Ferriera S."/>
            <person name="Fosler C."/>
            <person name="Glodek A."/>
            <person name="Gu Z."/>
            <person name="Jennings D."/>
            <person name="Kraft C.L."/>
            <person name="Nguyen T."/>
            <person name="Pfannkoch C.M."/>
            <person name="Sitter C."/>
            <person name="Sutton G.G."/>
            <person name="Venter J.C."/>
            <person name="Woodage T."/>
            <person name="Smith D."/>
            <person name="Lee H.-M."/>
            <person name="Gustafson E."/>
            <person name="Cahill P."/>
            <person name="Kana A."/>
            <person name="Doucette-Stamm L."/>
            <person name="Weinstock K."/>
            <person name="Fechtel K."/>
            <person name="Weiss R.B."/>
            <person name="Dunn D.M."/>
            <person name="Green E.D."/>
            <person name="Blakesley R.W."/>
            <person name="Bouffard G.G."/>
            <person name="De Jong P.J."/>
            <person name="Osoegawa K."/>
            <person name="Zhu B."/>
            <person name="Marra M."/>
            <person name="Schein J."/>
            <person name="Bosdet I."/>
            <person name="Fjell C."/>
            <person name="Jones S."/>
            <person name="Krzywinski M."/>
            <person name="Mathewson C."/>
            <person name="Siddiqui A."/>
            <person name="Wye N."/>
            <person name="McPherson J."/>
            <person name="Zhao S."/>
            <person name="Fraser C.M."/>
            <person name="Shetty J."/>
            <person name="Shatsman S."/>
            <person name="Geer K."/>
            <person name="Chen Y."/>
            <person name="Abramzon S."/>
            <person name="Nierman W.C."/>
            <person name="Havlak P.H."/>
            <person name="Chen R."/>
            <person name="Durbin K.J."/>
            <person name="Egan A."/>
            <person name="Ren Y."/>
            <person name="Song X.-Z."/>
            <person name="Li B."/>
            <person name="Liu Y."/>
            <person name="Qin X."/>
            <person name="Cawley S."/>
            <person name="Cooney A.J."/>
            <person name="D'Souza L.M."/>
            <person name="Martin K."/>
            <person name="Wu J.Q."/>
            <person name="Gonzalez-Garay M.L."/>
            <person name="Jackson A.R."/>
            <person name="Kalafus K.J."/>
            <person name="McLeod M.P."/>
            <person name="Milosavljevic A."/>
            <person name="Virk D."/>
            <person name="Volkov A."/>
            <person name="Wheeler D.A."/>
            <person name="Zhang Z."/>
            <person name="Bailey J.A."/>
            <person name="Eichler E.E."/>
            <person name="Tuzun E."/>
            <person name="Birney E."/>
            <person name="Mongin E."/>
            <person name="Ureta-Vidal A."/>
            <person name="Woodwark C."/>
            <person name="Zdobnov E."/>
            <person name="Bork P."/>
            <person name="Suyama M."/>
            <person name="Torrents D."/>
            <person name="Alexandersson M."/>
            <person name="Trask B.J."/>
            <person name="Young J.M."/>
            <person name="Huang H."/>
            <person name="Wang H."/>
            <person name="Xing H."/>
            <person name="Daniels S."/>
            <person name="Gietzen D."/>
            <person name="Schmidt J."/>
            <person name="Stevens K."/>
            <person name="Vitt U."/>
            <person name="Wingrove J."/>
            <person name="Camara F."/>
            <person name="Mar Alba M."/>
            <person name="Abril J.F."/>
            <person name="Guigo R."/>
            <person name="Smit A."/>
            <person name="Dubchak I."/>
            <person name="Rubin E.M."/>
            <person name="Couronne O."/>
            <person name="Poliakov A."/>
            <person name="Huebner N."/>
            <person name="Ganten D."/>
            <person name="Goesele C."/>
            <person name="Hummel O."/>
            <person name="Kreitler T."/>
            <person name="Lee Y.-A."/>
            <person name="Monti J."/>
            <person name="Schulz H."/>
            <person name="Zimdahl H."/>
            <person name="Himmelbauer H."/>
            <person name="Lehrach H."/>
            <person name="Jacob H.J."/>
            <person name="Bromberg S."/>
            <person name="Gullings-Handley J."/>
            <person name="Jensen-Seaman M.I."/>
            <person name="Kwitek A.E."/>
            <person name="Lazar J."/>
            <person name="Pasko D."/>
            <person name="Tonellato P.J."/>
            <person name="Twigger S."/>
            <person name="Ponting C.P."/>
            <person name="Duarte J.M."/>
            <person name="Rice S."/>
            <person name="Goodstadt L."/>
            <person name="Beatson S.A."/>
            <person name="Emes R.D."/>
            <person name="Winter E.E."/>
            <person name="Webber C."/>
            <person name="Brandt P."/>
            <person name="Nyakatura G."/>
            <person name="Adetobi M."/>
            <person name="Chiaromonte F."/>
            <person name="Elnitski L."/>
            <person name="Eswara P."/>
            <person name="Hardison R.C."/>
            <person name="Hou M."/>
            <person name="Kolbe D."/>
            <person name="Makova K."/>
            <person name="Miller W."/>
            <person name="Nekrutenko A."/>
            <person name="Riemer C."/>
            <person name="Schwartz S."/>
            <person name="Taylor J."/>
            <person name="Yang S."/>
            <person name="Zhang Y."/>
            <person name="Lindpaintner K."/>
            <person name="Andrews T.D."/>
            <person name="Caccamo M."/>
            <person name="Clamp M."/>
            <person name="Clarke L."/>
            <person name="Curwen V."/>
            <person name="Durbin R.M."/>
            <person name="Eyras E."/>
            <person name="Searle S.M."/>
            <person name="Cooper G.M."/>
            <person name="Batzoglou S."/>
            <person name="Brudno M."/>
            <person name="Sidow A."/>
            <person name="Stone E.A."/>
            <person name="Payseur B.A."/>
            <person name="Bourque G."/>
            <person name="Lopez-Otin C."/>
            <person name="Puente X.S."/>
            <person name="Chakrabarti K."/>
            <person name="Chatterji S."/>
            <person name="Dewey C."/>
            <person name="Pachter L."/>
            <person name="Bray N."/>
            <person name="Yap V.B."/>
            <person name="Caspi A."/>
            <person name="Tesler G."/>
            <person name="Pevzner P.A."/>
            <person name="Haussler D."/>
            <person name="Roskin K.M."/>
            <person name="Baertsch R."/>
            <person name="Clawson H."/>
            <person name="Furey T.S."/>
            <person name="Hinrichs A.S."/>
            <person name="Karolchik D."/>
            <person name="Kent W.J."/>
            <person name="Rosenbloom K.R."/>
            <person name="Trumbower H."/>
            <person name="Weirauch M."/>
            <person name="Cooper D.N."/>
            <person name="Stenson P.D."/>
            <person name="Ma B."/>
            <person name="Brent M."/>
            <person name="Arumugam M."/>
            <person name="Shteynberg D."/>
            <person name="Copley R.R."/>
            <person name="Taylor M.S."/>
            <person name="Riethman H."/>
            <person name="Mudunuri U."/>
            <person name="Peterson J."/>
            <person name="Guyer M."/>
            <person name="Felsenfeld A."/>
            <person name="Old S."/>
            <person name="Mockrin S."/>
            <person name="Collins F.S."/>
        </authorList>
    </citation>
    <scope>NUCLEOTIDE SEQUENCE [LARGE SCALE GENOMIC DNA]</scope>
    <source>
        <strain>Brown Norway</strain>
    </source>
</reference>
<reference key="2">
    <citation type="journal article" date="2008" name="Biochem. Biophys. Res. Commun.">
        <title>MINK is a Rap2 effector for phosphorylation of the postsynaptic scaffold protein TANC1.</title>
        <authorList>
            <person name="Nonaka H."/>
            <person name="Takei K."/>
            <person name="Umikawa M."/>
            <person name="Oshiro M."/>
            <person name="Kuninaka K."/>
            <person name="Bayarjargal M."/>
            <person name="Asato T."/>
            <person name="Yamashiro Y."/>
            <person name="Uechi Y."/>
            <person name="Endo S."/>
            <person name="Suzuki T."/>
            <person name="Kariya K."/>
        </authorList>
    </citation>
    <scope>IDENTIFICATION BY MASS SPECTROMETRY</scope>
    <scope>INTERACTION WITH TANC1</scope>
    <scope>TISSUE SPECIFICITY</scope>
</reference>
<reference key="3">
    <citation type="journal article" date="2010" name="J. Neurosci.">
        <title>MINK and TNIK differentially act on Rap2-mediated signal transduction to regulate neuronal structure and AMPA receptor function.</title>
        <authorList>
            <person name="Hussain N.K."/>
            <person name="Hsin H."/>
            <person name="Huganir R.L."/>
            <person name="Sheng M."/>
        </authorList>
    </citation>
    <scope>FUNCTION</scope>
    <scope>SUBCELLULAR LOCATION</scope>
    <scope>DEVELOPMENTAL STAGE</scope>
</reference>
<reference key="4">
    <citation type="journal article" date="2012" name="Nat. Commun.">
        <title>Quantitative maps of protein phosphorylation sites across 14 different rat organs and tissues.</title>
        <authorList>
            <person name="Lundby A."/>
            <person name="Secher A."/>
            <person name="Lage K."/>
            <person name="Nordsborg N.B."/>
            <person name="Dmytriyev A."/>
            <person name="Lundby C."/>
            <person name="Olsen J.V."/>
        </authorList>
    </citation>
    <scope>PHOSPHORYLATION [LARGE SCALE ANALYSIS] AT SER-643; SER-765; SER-782 AND SER-786</scope>
    <scope>IDENTIFICATION BY MASS SPECTROMETRY [LARGE SCALE ANALYSIS]</scope>
</reference>
<gene>
    <name type="primary">Mink1</name>
    <name type="synonym">Map4k6</name>
    <name type="synonym">Mink</name>
</gene>
<dbReference type="EC" id="2.7.11.1"/>
<dbReference type="EMBL" id="AABR03073855">
    <property type="status" value="NOT_ANNOTATED_CDS"/>
    <property type="molecule type" value="Genomic_DNA"/>
</dbReference>
<dbReference type="SMR" id="F1LP90"/>
<dbReference type="FunCoup" id="F1LP90">
    <property type="interactions" value="2677"/>
</dbReference>
<dbReference type="IntAct" id="F1LP90">
    <property type="interactions" value="2"/>
</dbReference>
<dbReference type="MINT" id="F1LP90"/>
<dbReference type="STRING" id="10116.ENSRNOP00000050929"/>
<dbReference type="GlyGen" id="F1LP90">
    <property type="glycosylation" value="2 sites"/>
</dbReference>
<dbReference type="iPTMnet" id="F1LP90"/>
<dbReference type="PhosphoSitePlus" id="F1LP90"/>
<dbReference type="PaxDb" id="10116-ENSRNOP00000050929"/>
<dbReference type="UCSC" id="RGD:1359135">
    <property type="organism name" value="rat"/>
</dbReference>
<dbReference type="AGR" id="RGD:1359135"/>
<dbReference type="RGD" id="1359135">
    <property type="gene designation" value="Mink1"/>
</dbReference>
<dbReference type="eggNOG" id="KOG0587">
    <property type="taxonomic scope" value="Eukaryota"/>
</dbReference>
<dbReference type="InParanoid" id="F1LP90"/>
<dbReference type="Reactome" id="R-RNO-2559580">
    <property type="pathway name" value="Oxidative Stress Induced Senescence"/>
</dbReference>
<dbReference type="PRO" id="PR:F1LP90"/>
<dbReference type="Proteomes" id="UP000002494">
    <property type="component" value="Unplaced"/>
</dbReference>
<dbReference type="GO" id="GO:0030424">
    <property type="term" value="C:axon"/>
    <property type="evidence" value="ECO:0007669"/>
    <property type="project" value="UniProtKB-SubCell"/>
</dbReference>
<dbReference type="GO" id="GO:0005737">
    <property type="term" value="C:cytoplasm"/>
    <property type="evidence" value="ECO:0000250"/>
    <property type="project" value="UniProtKB"/>
</dbReference>
<dbReference type="GO" id="GO:0030425">
    <property type="term" value="C:dendrite"/>
    <property type="evidence" value="ECO:0007669"/>
    <property type="project" value="UniProtKB-SubCell"/>
</dbReference>
<dbReference type="GO" id="GO:0098978">
    <property type="term" value="C:glutamatergic synapse"/>
    <property type="evidence" value="ECO:0000314"/>
    <property type="project" value="SynGO"/>
</dbReference>
<dbReference type="GO" id="GO:0005794">
    <property type="term" value="C:Golgi apparatus"/>
    <property type="evidence" value="ECO:0000266"/>
    <property type="project" value="RGD"/>
</dbReference>
<dbReference type="GO" id="GO:0098794">
    <property type="term" value="C:postsynapse"/>
    <property type="evidence" value="ECO:0000314"/>
    <property type="project" value="SynGO"/>
</dbReference>
<dbReference type="GO" id="GO:0014069">
    <property type="term" value="C:postsynaptic density"/>
    <property type="evidence" value="ECO:0007669"/>
    <property type="project" value="UniProtKB-SubCell"/>
</dbReference>
<dbReference type="GO" id="GO:0005524">
    <property type="term" value="F:ATP binding"/>
    <property type="evidence" value="ECO:0000266"/>
    <property type="project" value="RGD"/>
</dbReference>
<dbReference type="GO" id="GO:0106310">
    <property type="term" value="F:protein serine kinase activity"/>
    <property type="evidence" value="ECO:0007669"/>
    <property type="project" value="RHEA"/>
</dbReference>
<dbReference type="GO" id="GO:0004674">
    <property type="term" value="F:protein serine/threonine kinase activity"/>
    <property type="evidence" value="ECO:0000250"/>
    <property type="project" value="UniProtKB"/>
</dbReference>
<dbReference type="GO" id="GO:0030036">
    <property type="term" value="P:actin cytoskeleton organization"/>
    <property type="evidence" value="ECO:0000266"/>
    <property type="project" value="RGD"/>
</dbReference>
<dbReference type="GO" id="GO:0007420">
    <property type="term" value="P:brain development"/>
    <property type="evidence" value="ECO:0000266"/>
    <property type="project" value="RGD"/>
</dbReference>
<dbReference type="GO" id="GO:0007268">
    <property type="term" value="P:chemical synaptic transmission"/>
    <property type="evidence" value="ECO:0000315"/>
    <property type="project" value="UniProtKB"/>
</dbReference>
<dbReference type="GO" id="GO:0048813">
    <property type="term" value="P:dendrite morphogenesis"/>
    <property type="evidence" value="ECO:0000315"/>
    <property type="project" value="UniProtKB"/>
</dbReference>
<dbReference type="GO" id="GO:0000165">
    <property type="term" value="P:MAPK cascade"/>
    <property type="evidence" value="ECO:0000318"/>
    <property type="project" value="GO_Central"/>
</dbReference>
<dbReference type="GO" id="GO:0045060">
    <property type="term" value="P:negative thymic T cell selection"/>
    <property type="evidence" value="ECO:0000266"/>
    <property type="project" value="RGD"/>
</dbReference>
<dbReference type="GO" id="GO:0070050">
    <property type="term" value="P:neuron cellular homeostasis"/>
    <property type="evidence" value="ECO:0000315"/>
    <property type="project" value="CACAO"/>
</dbReference>
<dbReference type="GO" id="GO:0048812">
    <property type="term" value="P:neuron projection morphogenesis"/>
    <property type="evidence" value="ECO:0000318"/>
    <property type="project" value="GO_Central"/>
</dbReference>
<dbReference type="GO" id="GO:0046330">
    <property type="term" value="P:positive regulation of JNK cascade"/>
    <property type="evidence" value="ECO:0000266"/>
    <property type="project" value="RGD"/>
</dbReference>
<dbReference type="GO" id="GO:1900745">
    <property type="term" value="P:positive regulation of p38MAPK cascade"/>
    <property type="evidence" value="ECO:0000266"/>
    <property type="project" value="RGD"/>
</dbReference>
<dbReference type="GO" id="GO:0046777">
    <property type="term" value="P:protein autophosphorylation"/>
    <property type="evidence" value="ECO:0000250"/>
    <property type="project" value="UniProtKB"/>
</dbReference>
<dbReference type="GO" id="GO:2000311">
    <property type="term" value="P:regulation of AMPA receptor activity"/>
    <property type="evidence" value="ECO:0000315"/>
    <property type="project" value="UniProtKB"/>
</dbReference>
<dbReference type="GO" id="GO:0030334">
    <property type="term" value="P:regulation of cell migration"/>
    <property type="evidence" value="ECO:0000266"/>
    <property type="project" value="RGD"/>
</dbReference>
<dbReference type="GO" id="GO:0022407">
    <property type="term" value="P:regulation of cell-cell adhesion"/>
    <property type="evidence" value="ECO:0000266"/>
    <property type="project" value="RGD"/>
</dbReference>
<dbReference type="GO" id="GO:0001952">
    <property type="term" value="P:regulation of cell-matrix adhesion"/>
    <property type="evidence" value="ECO:0000266"/>
    <property type="project" value="RGD"/>
</dbReference>
<dbReference type="GO" id="GO:0043408">
    <property type="term" value="P:regulation of MAPK cascade"/>
    <property type="evidence" value="ECO:0000318"/>
    <property type="project" value="GO_Central"/>
</dbReference>
<dbReference type="GO" id="GO:0099175">
    <property type="term" value="P:regulation of postsynapse organization"/>
    <property type="evidence" value="ECO:0000314"/>
    <property type="project" value="SynGO"/>
</dbReference>
<dbReference type="CDD" id="cd06636">
    <property type="entry name" value="STKc_MAP4K4_6_N"/>
    <property type="match status" value="1"/>
</dbReference>
<dbReference type="FunFam" id="1.10.510.10:FF:000003">
    <property type="entry name" value="TRAF2 and NCK-interacting protein kinase isoform 4"/>
    <property type="match status" value="1"/>
</dbReference>
<dbReference type="FunFam" id="3.30.200.20:FF:000006">
    <property type="entry name" value="TRAF2 and NCK-interacting protein kinase isoform 4"/>
    <property type="match status" value="1"/>
</dbReference>
<dbReference type="Gene3D" id="3.30.200.20">
    <property type="entry name" value="Phosphorylase Kinase, domain 1"/>
    <property type="match status" value="1"/>
</dbReference>
<dbReference type="Gene3D" id="1.10.510.10">
    <property type="entry name" value="Transferase(Phosphotransferase) domain 1"/>
    <property type="match status" value="1"/>
</dbReference>
<dbReference type="InterPro" id="IPR001180">
    <property type="entry name" value="CNH_dom"/>
</dbReference>
<dbReference type="InterPro" id="IPR011009">
    <property type="entry name" value="Kinase-like_dom_sf"/>
</dbReference>
<dbReference type="InterPro" id="IPR000719">
    <property type="entry name" value="Prot_kinase_dom"/>
</dbReference>
<dbReference type="InterPro" id="IPR017441">
    <property type="entry name" value="Protein_kinase_ATP_BS"/>
</dbReference>
<dbReference type="InterPro" id="IPR008271">
    <property type="entry name" value="Ser/Thr_kinase_AS"/>
</dbReference>
<dbReference type="InterPro" id="IPR051700">
    <property type="entry name" value="STE20_Ser-Thr_kinase"/>
</dbReference>
<dbReference type="PANTHER" id="PTHR47096">
    <property type="entry name" value="MISSHAPEN LIKE KINASE 1"/>
    <property type="match status" value="1"/>
</dbReference>
<dbReference type="PANTHER" id="PTHR47096:SF1">
    <property type="entry name" value="MISSHAPEN LIKE KINASE 1"/>
    <property type="match status" value="1"/>
</dbReference>
<dbReference type="Pfam" id="PF00780">
    <property type="entry name" value="CNH"/>
    <property type="match status" value="1"/>
</dbReference>
<dbReference type="Pfam" id="PF00069">
    <property type="entry name" value="Pkinase"/>
    <property type="match status" value="1"/>
</dbReference>
<dbReference type="SMART" id="SM00036">
    <property type="entry name" value="CNH"/>
    <property type="match status" value="1"/>
</dbReference>
<dbReference type="SMART" id="SM00220">
    <property type="entry name" value="S_TKc"/>
    <property type="match status" value="1"/>
</dbReference>
<dbReference type="SUPFAM" id="SSF56112">
    <property type="entry name" value="Protein kinase-like (PK-like)"/>
    <property type="match status" value="1"/>
</dbReference>
<dbReference type="PROSITE" id="PS50219">
    <property type="entry name" value="CNH"/>
    <property type="match status" value="1"/>
</dbReference>
<dbReference type="PROSITE" id="PS00107">
    <property type="entry name" value="PROTEIN_KINASE_ATP"/>
    <property type="match status" value="1"/>
</dbReference>
<dbReference type="PROSITE" id="PS50011">
    <property type="entry name" value="PROTEIN_KINASE_DOM"/>
    <property type="match status" value="1"/>
</dbReference>
<dbReference type="PROSITE" id="PS00108">
    <property type="entry name" value="PROTEIN_KINASE_ST"/>
    <property type="match status" value="1"/>
</dbReference>
<comment type="function">
    <text evidence="2 3 9">Serine/threonine kinase which acts as a negative regulator of Ras-related Rap2-mediated signal transduction to control neuronal structure and AMPA receptor trafficking (PubMed:21048137). Required for normal synaptic density, dendrite complexity, as well as surface AMPA receptor expression in hippocampal neurons (PubMed:21048137). Can activate the JNK and MAPK14/p38 pathways and mediates stimulation of the stress-activated protein kinase MAPK14/p38 MAPK downstream of the Raf/ERK pathway. Phosphorylates TANC1 upon stimulation by RAP2A, MBP and SMAD1 (By similarity). Has an essential function in negative selection of thymocytes, perhaps by coupling NCK1 to activation of JNK1 (By similarity). Activator of the Hippo signaling pathway which plays a pivotal role in organ size control and tumor suppression by restricting proliferation and promoting apoptosis. MAP4Ks act in parallel to and are partially redundant with STK3/MST2 and STK4/MST2 in the phosphorylation and activation of LATS1/2, and establish MAP4Ks as components of the expanded Hippo pathway (By similarity).</text>
</comment>
<comment type="catalytic activity">
    <reaction>
        <text>L-seryl-[protein] + ATP = O-phospho-L-seryl-[protein] + ADP + H(+)</text>
        <dbReference type="Rhea" id="RHEA:17989"/>
        <dbReference type="Rhea" id="RHEA-COMP:9863"/>
        <dbReference type="Rhea" id="RHEA-COMP:11604"/>
        <dbReference type="ChEBI" id="CHEBI:15378"/>
        <dbReference type="ChEBI" id="CHEBI:29999"/>
        <dbReference type="ChEBI" id="CHEBI:30616"/>
        <dbReference type="ChEBI" id="CHEBI:83421"/>
        <dbReference type="ChEBI" id="CHEBI:456216"/>
        <dbReference type="EC" id="2.7.11.1"/>
    </reaction>
</comment>
<comment type="catalytic activity">
    <reaction>
        <text>L-threonyl-[protein] + ATP = O-phospho-L-threonyl-[protein] + ADP + H(+)</text>
        <dbReference type="Rhea" id="RHEA:46608"/>
        <dbReference type="Rhea" id="RHEA-COMP:11060"/>
        <dbReference type="Rhea" id="RHEA-COMP:11605"/>
        <dbReference type="ChEBI" id="CHEBI:15378"/>
        <dbReference type="ChEBI" id="CHEBI:30013"/>
        <dbReference type="ChEBI" id="CHEBI:30616"/>
        <dbReference type="ChEBI" id="CHEBI:61977"/>
        <dbReference type="ChEBI" id="CHEBI:456216"/>
        <dbReference type="EC" id="2.7.11.1"/>
    </reaction>
</comment>
<comment type="cofactor">
    <cofactor evidence="1">
        <name>Mg(2+)</name>
        <dbReference type="ChEBI" id="CHEBI:18420"/>
    </cofactor>
</comment>
<comment type="subunit">
    <text evidence="1 8">Interacts with RAP2A and NCK1 (By similarity). Interacts with TANC1.</text>
</comment>
<comment type="subcellular location">
    <subcellularLocation>
        <location evidence="1">Cytoplasm</location>
    </subcellularLocation>
    <subcellularLocation>
        <location evidence="9">Postsynaptic density</location>
    </subcellularLocation>
    <subcellularLocation>
        <location evidence="9">Cell projection</location>
        <location evidence="9">Axon</location>
    </subcellularLocation>
    <subcellularLocation>
        <location evidence="9">Cell projection</location>
        <location evidence="9">Dendrite</location>
    </subcellularLocation>
</comment>
<comment type="developmental stage">
    <text evidence="9">Increased expression from 18 dpc to adulthood seen in cortex and hippocampus (at protein level).</text>
</comment>
<comment type="PTM">
    <text evidence="1">Autophosphorylated.</text>
</comment>
<comment type="similarity">
    <text evidence="10">Belongs to the protein kinase superfamily. STE Ser/Thr protein kinase family. STE20 subfamily.</text>
</comment>
<accession>F1LP90</accession>
<organism>
    <name type="scientific">Rattus norvegicus</name>
    <name type="common">Rat</name>
    <dbReference type="NCBI Taxonomy" id="10116"/>
    <lineage>
        <taxon>Eukaryota</taxon>
        <taxon>Metazoa</taxon>
        <taxon>Chordata</taxon>
        <taxon>Craniata</taxon>
        <taxon>Vertebrata</taxon>
        <taxon>Euteleostomi</taxon>
        <taxon>Mammalia</taxon>
        <taxon>Eutheria</taxon>
        <taxon>Euarchontoglires</taxon>
        <taxon>Glires</taxon>
        <taxon>Rodentia</taxon>
        <taxon>Myomorpha</taxon>
        <taxon>Muroidea</taxon>
        <taxon>Muridae</taxon>
        <taxon>Murinae</taxon>
        <taxon>Rattus</taxon>
    </lineage>
</organism>
<feature type="chain" id="PRO_0000413198" description="Misshapen-like kinase 1">
    <location>
        <begin position="1"/>
        <end position="1336"/>
    </location>
</feature>
<feature type="domain" description="Protein kinase" evidence="4">
    <location>
        <begin position="25"/>
        <end position="289"/>
    </location>
</feature>
<feature type="domain" description="CNH" evidence="5">
    <location>
        <begin position="1023"/>
        <end position="1310"/>
    </location>
</feature>
<feature type="region of interest" description="Disordered" evidence="7">
    <location>
        <begin position="299"/>
        <end position="347"/>
    </location>
</feature>
<feature type="region of interest" description="Disordered" evidence="7">
    <location>
        <begin position="363"/>
        <end position="383"/>
    </location>
</feature>
<feature type="region of interest" description="Disordered" evidence="7">
    <location>
        <begin position="395"/>
        <end position="890"/>
    </location>
</feature>
<feature type="region of interest" description="Mediates interaction with RAP2A" evidence="1">
    <location>
        <begin position="870"/>
        <end position="1336"/>
    </location>
</feature>
<feature type="region of interest" description="Disordered" evidence="7">
    <location>
        <begin position="909"/>
        <end position="946"/>
    </location>
</feature>
<feature type="compositionally biased region" description="Acidic residues" evidence="7">
    <location>
        <begin position="317"/>
        <end position="333"/>
    </location>
</feature>
<feature type="compositionally biased region" description="Low complexity" evidence="7">
    <location>
        <begin position="371"/>
        <end position="380"/>
    </location>
</feature>
<feature type="compositionally biased region" description="Basic and acidic residues" evidence="7">
    <location>
        <begin position="396"/>
        <end position="466"/>
    </location>
</feature>
<feature type="compositionally biased region" description="Low complexity" evidence="7">
    <location>
        <begin position="479"/>
        <end position="496"/>
    </location>
</feature>
<feature type="compositionally biased region" description="Basic and acidic residues" evidence="7">
    <location>
        <begin position="519"/>
        <end position="529"/>
    </location>
</feature>
<feature type="compositionally biased region" description="Polar residues" evidence="7">
    <location>
        <begin position="531"/>
        <end position="544"/>
    </location>
</feature>
<feature type="compositionally biased region" description="Pro residues" evidence="7">
    <location>
        <begin position="548"/>
        <end position="562"/>
    </location>
</feature>
<feature type="compositionally biased region" description="Polar residues" evidence="7">
    <location>
        <begin position="599"/>
        <end position="609"/>
    </location>
</feature>
<feature type="compositionally biased region" description="Low complexity" evidence="7">
    <location>
        <begin position="622"/>
        <end position="632"/>
    </location>
</feature>
<feature type="compositionally biased region" description="Polar residues" evidence="7">
    <location>
        <begin position="672"/>
        <end position="684"/>
    </location>
</feature>
<feature type="compositionally biased region" description="Pro residues" evidence="7">
    <location>
        <begin position="718"/>
        <end position="731"/>
    </location>
</feature>
<feature type="compositionally biased region" description="Basic and acidic residues" evidence="7">
    <location>
        <begin position="738"/>
        <end position="750"/>
    </location>
</feature>
<feature type="compositionally biased region" description="Basic and acidic residues" evidence="7">
    <location>
        <begin position="808"/>
        <end position="825"/>
    </location>
</feature>
<feature type="compositionally biased region" description="Acidic residues" evidence="7">
    <location>
        <begin position="832"/>
        <end position="848"/>
    </location>
</feature>
<feature type="compositionally biased region" description="Polar residues" evidence="7">
    <location>
        <begin position="919"/>
        <end position="933"/>
    </location>
</feature>
<feature type="active site" description="Proton acceptor" evidence="4 6">
    <location>
        <position position="153"/>
    </location>
</feature>
<feature type="binding site" evidence="4">
    <location>
        <begin position="31"/>
        <end position="39"/>
    </location>
    <ligand>
        <name>ATP</name>
        <dbReference type="ChEBI" id="CHEBI:30616"/>
    </ligand>
</feature>
<feature type="binding site" evidence="4">
    <location>
        <position position="54"/>
    </location>
    <ligand>
        <name>ATP</name>
        <dbReference type="ChEBI" id="CHEBI:30616"/>
    </ligand>
</feature>
<feature type="modified residue" description="Phosphoserine" evidence="3">
    <location>
        <position position="324"/>
    </location>
</feature>
<feature type="modified residue" description="Phosphoserine" evidence="3">
    <location>
        <position position="326"/>
    </location>
</feature>
<feature type="modified residue" description="Omega-N-methylarginine" evidence="3">
    <location>
        <position position="502"/>
    </location>
</feature>
<feature type="modified residue" description="Omega-N-methylarginine" evidence="2">
    <location>
        <position position="510"/>
    </location>
</feature>
<feature type="modified residue" description="Phosphoserine" evidence="11">
    <location>
        <position position="643"/>
    </location>
</feature>
<feature type="modified residue" description="Phosphoserine" evidence="2">
    <location>
        <position position="703"/>
    </location>
</feature>
<feature type="modified residue" description="Phosphoserine" evidence="2">
    <location>
        <position position="756"/>
    </location>
</feature>
<feature type="modified residue" description="Phosphoserine" evidence="11">
    <location>
        <position position="765"/>
    </location>
</feature>
<feature type="modified residue" description="Phosphoserine" evidence="2">
    <location>
        <position position="781"/>
    </location>
</feature>
<feature type="modified residue" description="Phosphoserine" evidence="11">
    <location>
        <position position="782"/>
    </location>
</feature>
<feature type="modified residue" description="Phosphoserine" evidence="11">
    <location>
        <position position="786"/>
    </location>
</feature>
<feature type="modified residue" description="Phosphothreonine" evidence="3">
    <location>
        <position position="895"/>
    </location>
</feature>
<keyword id="KW-0067">ATP-binding</keyword>
<keyword id="KW-0966">Cell projection</keyword>
<keyword id="KW-0963">Cytoplasm</keyword>
<keyword id="KW-0418">Kinase</keyword>
<keyword id="KW-0488">Methylation</keyword>
<keyword id="KW-0547">Nucleotide-binding</keyword>
<keyword id="KW-0597">Phosphoprotein</keyword>
<keyword id="KW-1185">Reference proteome</keyword>
<keyword id="KW-0723">Serine/threonine-protein kinase</keyword>
<keyword id="KW-0770">Synapse</keyword>
<keyword id="KW-0808">Transferase</keyword>